<gene>
    <name type="primary">casB</name>
    <name type="synonym">cse2</name>
    <name type="synonym">ygcK</name>
    <name type="ordered locus">b2759</name>
    <name type="ordered locus">JW2729</name>
</gene>
<protein>
    <recommendedName>
        <fullName>CRISPR system Cascade subunit CasB</fullName>
    </recommendedName>
</protein>
<reference key="1">
    <citation type="journal article" date="1997" name="Science">
        <title>The complete genome sequence of Escherichia coli K-12.</title>
        <authorList>
            <person name="Blattner F.R."/>
            <person name="Plunkett G. III"/>
            <person name="Bloch C.A."/>
            <person name="Perna N.T."/>
            <person name="Burland V."/>
            <person name="Riley M."/>
            <person name="Collado-Vides J."/>
            <person name="Glasner J.D."/>
            <person name="Rode C.K."/>
            <person name="Mayhew G.F."/>
            <person name="Gregor J."/>
            <person name="Davis N.W."/>
            <person name="Kirkpatrick H.A."/>
            <person name="Goeden M.A."/>
            <person name="Rose D.J."/>
            <person name="Mau B."/>
            <person name="Shao Y."/>
        </authorList>
    </citation>
    <scope>NUCLEOTIDE SEQUENCE [LARGE SCALE GENOMIC DNA]</scope>
    <source>
        <strain>K12 / MG1655 / ATCC 47076</strain>
    </source>
</reference>
<reference key="2">
    <citation type="journal article" date="2006" name="Mol. Syst. Biol.">
        <title>Highly accurate genome sequences of Escherichia coli K-12 strains MG1655 and W3110.</title>
        <authorList>
            <person name="Hayashi K."/>
            <person name="Morooka N."/>
            <person name="Yamamoto Y."/>
            <person name="Fujita K."/>
            <person name="Isono K."/>
            <person name="Choi S."/>
            <person name="Ohtsubo E."/>
            <person name="Baba T."/>
            <person name="Wanner B.L."/>
            <person name="Mori H."/>
            <person name="Horiuchi T."/>
        </authorList>
    </citation>
    <scope>NUCLEOTIDE SEQUENCE [LARGE SCALE GENOMIC DNA]</scope>
    <source>
        <strain>K12 / W3110 / ATCC 27325 / DSM 5911</strain>
    </source>
</reference>
<reference key="3">
    <citation type="journal article" date="2008" name="Science">
        <title>Small CRISPR RNAs guide antiviral defense in prokaryotes.</title>
        <authorList>
            <person name="Brouns S.J."/>
            <person name="Jore M.M."/>
            <person name="Lundgren M."/>
            <person name="Westra E.R."/>
            <person name="Slijkhuis R.J."/>
            <person name="Snijders A.P."/>
            <person name="Dickman M.J."/>
            <person name="Makarova K.S."/>
            <person name="Koonin E.V."/>
            <person name="van der Oost J."/>
        </authorList>
    </citation>
    <scope>SUBUNIT</scope>
    <scope>DISRUPTION PHENOTYPE</scope>
    <source>
        <strain>K12 / W3110 / ATCC 27325 / DSM 5911</strain>
    </source>
</reference>
<reference key="4">
    <citation type="journal article" date="2009" name="J. Bacteriol.">
        <title>Involvement of the leucine response transcription factor LeuO in regulation of the genes for sulfa drug efflux.</title>
        <authorList>
            <person name="Shimada T."/>
            <person name="Yamamoto K."/>
            <person name="Ishihama A."/>
        </authorList>
    </citation>
    <scope>OPERON STRUCTURE</scope>
    <scope>INDUCTION BY LEUO</scope>
    <source>
        <strain>K12 / BW25113</strain>
    </source>
</reference>
<reference key="5">
    <citation type="journal article" date="2010" name="Mol. Microbiol.">
        <title>Identification and characterization of E. coli CRISPR-cas promoters and their silencing by H-NS.</title>
        <authorList>
            <person name="Pul U."/>
            <person name="Wurm R."/>
            <person name="Arslan Z."/>
            <person name="Geissen R."/>
            <person name="Hofmann N."/>
            <person name="Wagner R."/>
        </authorList>
    </citation>
    <scope>INDUCTION BY H-NS</scope>
    <source>
        <strain>K12</strain>
    </source>
</reference>
<reference key="6">
    <citation type="journal article" date="2011" name="Mol. Microbiol.">
        <title>Envelope stress is a trigger of CRISPR RNA-mediated DNA silencing in Escherichia coli.</title>
        <authorList>
            <person name="Perez-Rodriguez R."/>
            <person name="Haitjema C."/>
            <person name="Huang Q."/>
            <person name="Nam K.H."/>
            <person name="Bernardis S."/>
            <person name="Ke A."/>
            <person name="DeLisa M.P."/>
        </authorList>
    </citation>
    <scope>SUBUNIT</scope>
    <scope>INDUCTION BY BAER</scope>
    <scope>ROLE IN PLASMID SILENCING</scope>
    <scope>DISRUPTION PHENOTYPE</scope>
    <source>
        <strain>K12 / BW25113</strain>
    </source>
</reference>
<reference key="7">
    <citation type="journal article" date="2011" name="Nat. Struct. Mol. Biol.">
        <title>Structural basis for CRISPR RNA-guided DNA recognition by Cascade.</title>
        <authorList>
            <person name="Jore M.M."/>
            <person name="Lundgren M."/>
            <person name="van Duijn E."/>
            <person name="Bultema J.B."/>
            <person name="Westra E.R."/>
            <person name="Waghmare S.P."/>
            <person name="Wiedenheft B."/>
            <person name="Pul U."/>
            <person name="Wurm R."/>
            <person name="Wagner R."/>
            <person name="Beijer M.R."/>
            <person name="Barendregt A."/>
            <person name="Zhou K."/>
            <person name="Snijders A.P."/>
            <person name="Dickman M.J."/>
            <person name="Doudna J.A."/>
            <person name="Boekema E.J."/>
            <person name="Heck A.J."/>
            <person name="van der Oost J."/>
            <person name="Brouns S.J."/>
        </authorList>
    </citation>
    <scope>FUNCTION IN CASCADE</scope>
    <scope>MASS SPECTROMETRY</scope>
    <scope>SUBUNIT</scope>
    <scope>STRUCTURE BY ELECTRON MICROSCOPY</scope>
    <scope>INTERACTION WITH CASC</scope>
    <scope>DISRUPTION PHENOTYPE</scope>
    <source>
        <strain>K12</strain>
    </source>
</reference>
<reference key="8">
    <citation type="journal article" date="2011" name="Nature">
        <title>Structures of the RNA-guided surveillance complex from a bacterial immune system.</title>
        <authorList>
            <person name="Wiedenheft B."/>
            <person name="Lander G.C."/>
            <person name="Zhou K."/>
            <person name="Jore M.M."/>
            <person name="Brouns S.J."/>
            <person name="van der Oost J."/>
            <person name="Doudna J.A."/>
            <person name="Nogales E."/>
        </authorList>
    </citation>
    <scope>STRUCTURE BY ELECTRON MICROSCOPY OF CASCADE WITH AND WITHOUT TARGET RNA</scope>
    <scope>RNA-BINDING</scope>
    <scope>INTERACTION WITH CASA; CASC AND CASE</scope>
    <source>
        <strain>K12</strain>
    </source>
</reference>
<reference key="9">
    <citation type="journal article" date="2012" name="Mol. Cell">
        <title>CRISPR immunity relies on the consecutive binding and degradation of negatively supercoiled invader DNA by Cascade and Cas3.</title>
        <authorList>
            <person name="Westra E.R."/>
            <person name="van Erp P.B."/>
            <person name="Kunne T."/>
            <person name="Wong S.P."/>
            <person name="Staals R.H."/>
            <person name="Seegers C.L."/>
            <person name="Bollen S."/>
            <person name="Jore M.M."/>
            <person name="Semenova E."/>
            <person name="Severinov K."/>
            <person name="de Vos W.M."/>
            <person name="Dame R.T."/>
            <person name="de Vries R."/>
            <person name="Brouns S.J."/>
            <person name="van der Oost J."/>
        </authorList>
    </citation>
    <scope>SUBUNIT</scope>
    <scope>CASCADE DNA-BINDING</scope>
    <source>
        <strain>K12 / MG1655 / ATCC 47076</strain>
    </source>
</reference>
<comment type="function">
    <text>CRISPR (clustered regularly interspaced short palindromic repeat), is an adaptive immune system that provides protection against mobile genetic elements (viruses, transposable elements and conjugative plasmids). CRISPR clusters contain sequences complementary to antecedent mobile elements and target invading nucleic acids. CRISPR clusters are transcribed and processed into CRISPR RNA (crRNA).</text>
</comment>
<comment type="function">
    <text>A component of Cascade, which participates in CRISPR interference, the third stage of CRISPR immunity. Cascade binds both crRNA and in a sequence-specific manner negatively supercoiled dsDNA target. This leads to the formation of an R-loop in which the crRNA binds the target DNA, displacing the noncomplementary strand. Cas3 is recruited to Cascade, nicks target DNA and then unwinds and cleaves the target, leading to DNA degradation and invader neutralization.</text>
</comment>
<comment type="subunit">
    <text evidence="1 4 5 6 7">Homodimer. Part of the Cascade ribonucleoprotein complex, with stoichiometry CasA(1),CasB(2), CasC(6),CasD(1),CasE(1)-crRNA(1). The CasB homodimer forms a cleft that cradles the 3' end of the crRNA. Interacts directly with crRNA, CasA, CasC and CasE. Stable subcomplexes of CasBCDE-crRNA and CasCDE-crRNA also form, both of which are able to bind target dsDNA. Binding of target ssRNA or dsDNA causes a conformational change in the Cascade complex.</text>
</comment>
<comment type="induction">
    <text evidence="2 3 4">Repressed by H-NS, activated by LeuO. Activated by the BaeSR two-component regulatory system, possibly due to envelope stress. Part of the casABCDE-ygbT-ygbF operon.</text>
</comment>
<comment type="mass spectrometry"/>
<comment type="disruption phenotype">
    <text evidence="1 4 5">Loss of resistance to bacteriophage lambda infection, loss of plasmid silencing. Increased levels of 57 nucleotide crRNA and also 2 and 3 spacer-repeat units.</text>
</comment>
<comment type="similarity">
    <text evidence="8">Belongs to the CRISPR-associated CasB/Cse2 family.</text>
</comment>
<comment type="sequence caution" evidence="8">
    <conflict type="frameshift">
        <sequence resource="EMBL-CDS" id="AAA69269"/>
    </conflict>
</comment>
<evidence type="ECO:0000269" key="1">
    <source>
    </source>
</evidence>
<evidence type="ECO:0000269" key="2">
    <source>
    </source>
</evidence>
<evidence type="ECO:0000269" key="3">
    <source>
    </source>
</evidence>
<evidence type="ECO:0000269" key="4">
    <source>
    </source>
</evidence>
<evidence type="ECO:0000269" key="5">
    <source>
    </source>
</evidence>
<evidence type="ECO:0000269" key="6">
    <source>
    </source>
</evidence>
<evidence type="ECO:0000269" key="7">
    <source>
    </source>
</evidence>
<evidence type="ECO:0000305" key="8"/>
<evidence type="ECO:0007829" key="9">
    <source>
        <dbReference type="PDB" id="4U7U"/>
    </source>
</evidence>
<evidence type="ECO:0007829" key="10">
    <source>
        <dbReference type="PDB" id="5H9F"/>
    </source>
</evidence>
<proteinExistence type="evidence at protein level"/>
<accession>P76632</accession>
<accession>Q2MA70</accession>
<accession>Q46900</accession>
<dbReference type="EMBL" id="U29579">
    <property type="protein sequence ID" value="AAA69269.1"/>
    <property type="status" value="ALT_FRAME"/>
    <property type="molecule type" value="Genomic_DNA"/>
</dbReference>
<dbReference type="EMBL" id="U00096">
    <property type="protein sequence ID" value="AAC75801.1"/>
    <property type="molecule type" value="Genomic_DNA"/>
</dbReference>
<dbReference type="EMBL" id="AP009048">
    <property type="protein sequence ID" value="BAE76836.1"/>
    <property type="molecule type" value="Genomic_DNA"/>
</dbReference>
<dbReference type="PIR" id="C65057">
    <property type="entry name" value="C65057"/>
</dbReference>
<dbReference type="RefSeq" id="NP_417239.1">
    <property type="nucleotide sequence ID" value="NC_000913.3"/>
</dbReference>
<dbReference type="RefSeq" id="WP_000752800.1">
    <property type="nucleotide sequence ID" value="NZ_LN832404.1"/>
</dbReference>
<dbReference type="PDB" id="4QYZ">
    <property type="method" value="X-ray"/>
    <property type="resolution" value="3.03 A"/>
    <property type="chains" value="B/C=1-160"/>
</dbReference>
<dbReference type="PDB" id="4TVX">
    <property type="method" value="X-ray"/>
    <property type="resolution" value="3.24 A"/>
    <property type="chains" value="J/K/V/W=1-160"/>
</dbReference>
<dbReference type="PDB" id="4U7U">
    <property type="method" value="X-ray"/>
    <property type="resolution" value="3.00 A"/>
    <property type="chains" value="B/C/N/O=1-160"/>
</dbReference>
<dbReference type="PDB" id="5CD4">
    <property type="method" value="X-ray"/>
    <property type="resolution" value="3.20 A"/>
    <property type="chains" value="J/K/V/W=1-160"/>
</dbReference>
<dbReference type="PDB" id="5H9E">
    <property type="method" value="X-ray"/>
    <property type="resolution" value="3.21 A"/>
    <property type="chains" value="B/C=1-160"/>
</dbReference>
<dbReference type="PDB" id="5H9F">
    <property type="method" value="X-ray"/>
    <property type="resolution" value="2.45 A"/>
    <property type="chains" value="B/C=1-160"/>
</dbReference>
<dbReference type="PDBsum" id="4QYZ"/>
<dbReference type="PDBsum" id="4TVX"/>
<dbReference type="PDBsum" id="4U7U"/>
<dbReference type="PDBsum" id="5CD4"/>
<dbReference type="PDBsum" id="5H9E"/>
<dbReference type="PDBsum" id="5H9F"/>
<dbReference type="EMDB" id="EMD-5929"/>
<dbReference type="EMDB" id="EMD-5930"/>
<dbReference type="SMR" id="P76632"/>
<dbReference type="BioGRID" id="4260739">
    <property type="interactions" value="191"/>
</dbReference>
<dbReference type="ComplexPortal" id="CPX-1005">
    <property type="entry name" value="Cascade complex"/>
</dbReference>
<dbReference type="DIP" id="DIP-12127N"/>
<dbReference type="FunCoup" id="P76632">
    <property type="interactions" value="26"/>
</dbReference>
<dbReference type="IntAct" id="P76632">
    <property type="interactions" value="13"/>
</dbReference>
<dbReference type="STRING" id="511145.b2759"/>
<dbReference type="PaxDb" id="511145-b2759"/>
<dbReference type="EnsemblBacteria" id="AAC75801">
    <property type="protein sequence ID" value="AAC75801"/>
    <property type="gene ID" value="b2759"/>
</dbReference>
<dbReference type="GeneID" id="947223"/>
<dbReference type="KEGG" id="ecj:JW2729"/>
<dbReference type="KEGG" id="eco:b2759"/>
<dbReference type="KEGG" id="ecoc:C3026_15165"/>
<dbReference type="PATRIC" id="fig|1411691.4.peg.3979"/>
<dbReference type="EchoBASE" id="EB2919"/>
<dbReference type="eggNOG" id="ENOG5032TS5">
    <property type="taxonomic scope" value="Bacteria"/>
</dbReference>
<dbReference type="HOGENOM" id="CLU_144604_0_0_6"/>
<dbReference type="InParanoid" id="P76632"/>
<dbReference type="OMA" id="YQNWSEL"/>
<dbReference type="OrthoDB" id="5767307at2"/>
<dbReference type="BioCyc" id="EcoCyc:G7429-MONOMER"/>
<dbReference type="BioCyc" id="MetaCyc:G7429-MONOMER"/>
<dbReference type="EvolutionaryTrace" id="P76632"/>
<dbReference type="PRO" id="PR:P76632"/>
<dbReference type="Proteomes" id="UP000000625">
    <property type="component" value="Chromosome"/>
</dbReference>
<dbReference type="GO" id="GO:0032991">
    <property type="term" value="C:protein-containing complex"/>
    <property type="evidence" value="ECO:0000314"/>
    <property type="project" value="EcoCyc"/>
</dbReference>
<dbReference type="GO" id="GO:0003677">
    <property type="term" value="F:DNA binding"/>
    <property type="evidence" value="ECO:0000314"/>
    <property type="project" value="EcoCyc"/>
</dbReference>
<dbReference type="GO" id="GO:0003676">
    <property type="term" value="F:nucleic acid binding"/>
    <property type="evidence" value="ECO:0000314"/>
    <property type="project" value="EcoCyc"/>
</dbReference>
<dbReference type="GO" id="GO:0003723">
    <property type="term" value="F:RNA binding"/>
    <property type="evidence" value="ECO:0007669"/>
    <property type="project" value="UniProtKB-KW"/>
</dbReference>
<dbReference type="GO" id="GO:0099048">
    <property type="term" value="P:CRISPR-cas system"/>
    <property type="evidence" value="ECO:0000314"/>
    <property type="project" value="ComplexPortal"/>
</dbReference>
<dbReference type="GO" id="GO:0051607">
    <property type="term" value="P:defense response to virus"/>
    <property type="evidence" value="ECO:0000315"/>
    <property type="project" value="EcoCyc"/>
</dbReference>
<dbReference type="CDD" id="cd09670">
    <property type="entry name" value="Cse2_I-E"/>
    <property type="match status" value="1"/>
</dbReference>
<dbReference type="FunFam" id="1.10.520.40:FF:000001">
    <property type="entry name" value="CRISPR system Cascade subunit CasB"/>
    <property type="match status" value="1"/>
</dbReference>
<dbReference type="Gene3D" id="1.10.520.40">
    <property type="entry name" value="CRISPR-associated protein Cse2"/>
    <property type="match status" value="1"/>
</dbReference>
<dbReference type="InterPro" id="IPR013382">
    <property type="entry name" value="CRISPR-assoc_prot_Cse2"/>
</dbReference>
<dbReference type="InterPro" id="IPR038287">
    <property type="entry name" value="Cse2_sf"/>
</dbReference>
<dbReference type="NCBIfam" id="TIGR02548">
    <property type="entry name" value="casB_cse2"/>
    <property type="match status" value="1"/>
</dbReference>
<dbReference type="Pfam" id="PF09485">
    <property type="entry name" value="CRISPR_Cse2"/>
    <property type="match status" value="1"/>
</dbReference>
<keyword id="KW-0002">3D-structure</keyword>
<keyword id="KW-0051">Antiviral defense</keyword>
<keyword id="KW-1185">Reference proteome</keyword>
<keyword id="KW-0694">RNA-binding</keyword>
<sequence>MADEIDAMALYRAWQQLDNGSCAQIRRVSEPDELRDIPAFYRLVQPFGWENPRHQQALLRMVFCLSAGKNVIRHQDKKSEQTTGISLGRALANSGRINERRIFQLIRADRTADMVQLRRLLTHAEPVLDWPLMARMLTWWGKRERQQLLEDFVLTTNKNA</sequence>
<name>CSE2_ECOLI</name>
<organism>
    <name type="scientific">Escherichia coli (strain K12)</name>
    <dbReference type="NCBI Taxonomy" id="83333"/>
    <lineage>
        <taxon>Bacteria</taxon>
        <taxon>Pseudomonadati</taxon>
        <taxon>Pseudomonadota</taxon>
        <taxon>Gammaproteobacteria</taxon>
        <taxon>Enterobacterales</taxon>
        <taxon>Enterobacteriaceae</taxon>
        <taxon>Escherichia</taxon>
    </lineage>
</organism>
<feature type="chain" id="PRO_0000169323" description="CRISPR system Cascade subunit CasB">
    <location>
        <begin position="1"/>
        <end position="160"/>
    </location>
</feature>
<feature type="helix" evidence="10">
    <location>
        <begin position="7"/>
        <end position="16"/>
    </location>
</feature>
<feature type="helix" evidence="10">
    <location>
        <begin position="19"/>
        <end position="26"/>
    </location>
</feature>
<feature type="helix" evidence="10">
    <location>
        <begin position="31"/>
        <end position="36"/>
    </location>
</feature>
<feature type="helix" evidence="10">
    <location>
        <begin position="38"/>
        <end position="44"/>
    </location>
</feature>
<feature type="helix" evidence="10">
    <location>
        <begin position="45"/>
        <end position="47"/>
    </location>
</feature>
<feature type="turn" evidence="10">
    <location>
        <begin position="48"/>
        <end position="50"/>
    </location>
</feature>
<feature type="helix" evidence="10">
    <location>
        <begin position="52"/>
        <end position="65"/>
    </location>
</feature>
<feature type="strand" evidence="10">
    <location>
        <begin position="69"/>
        <end position="74"/>
    </location>
</feature>
<feature type="strand" evidence="9">
    <location>
        <begin position="79"/>
        <end position="83"/>
    </location>
</feature>
<feature type="helix" evidence="10">
    <location>
        <begin position="87"/>
        <end position="94"/>
    </location>
</feature>
<feature type="helix" evidence="10">
    <location>
        <begin position="99"/>
        <end position="106"/>
    </location>
</feature>
<feature type="helix" evidence="10">
    <location>
        <begin position="112"/>
        <end position="124"/>
    </location>
</feature>
<feature type="helix" evidence="10">
    <location>
        <begin position="130"/>
        <end position="138"/>
    </location>
</feature>
<feature type="helix" evidence="10">
    <location>
        <begin position="142"/>
        <end position="158"/>
    </location>
</feature>